<comment type="function">
    <text evidence="1">IGPS catalyzes the conversion of PRFAR and glutamine to IGP, AICAR and glutamate. The HisF subunit catalyzes the cyclization activity that produces IGP and AICAR from PRFAR using the ammonia provided by the HisH subunit.</text>
</comment>
<comment type="catalytic activity">
    <reaction evidence="1">
        <text>5-[(5-phospho-1-deoxy-D-ribulos-1-ylimino)methylamino]-1-(5-phospho-beta-D-ribosyl)imidazole-4-carboxamide + L-glutamine = D-erythro-1-(imidazol-4-yl)glycerol 3-phosphate + 5-amino-1-(5-phospho-beta-D-ribosyl)imidazole-4-carboxamide + L-glutamate + H(+)</text>
        <dbReference type="Rhea" id="RHEA:24793"/>
        <dbReference type="ChEBI" id="CHEBI:15378"/>
        <dbReference type="ChEBI" id="CHEBI:29985"/>
        <dbReference type="ChEBI" id="CHEBI:58278"/>
        <dbReference type="ChEBI" id="CHEBI:58359"/>
        <dbReference type="ChEBI" id="CHEBI:58475"/>
        <dbReference type="ChEBI" id="CHEBI:58525"/>
        <dbReference type="EC" id="4.3.2.10"/>
    </reaction>
</comment>
<comment type="pathway">
    <text evidence="1">Amino-acid biosynthesis; L-histidine biosynthesis; L-histidine from 5-phospho-alpha-D-ribose 1-diphosphate: step 5/9.</text>
</comment>
<comment type="subunit">
    <text evidence="1">Heterodimer of HisH and HisF.</text>
</comment>
<comment type="subcellular location">
    <subcellularLocation>
        <location evidence="1">Cytoplasm</location>
    </subcellularLocation>
</comment>
<comment type="similarity">
    <text evidence="1">Belongs to the HisA/HisF family.</text>
</comment>
<keyword id="KW-0028">Amino-acid biosynthesis</keyword>
<keyword id="KW-0963">Cytoplasm</keyword>
<keyword id="KW-0368">Histidine biosynthesis</keyword>
<keyword id="KW-0456">Lyase</keyword>
<keyword id="KW-1185">Reference proteome</keyword>
<reference key="1">
    <citation type="submission" date="2009-01" db="EMBL/GenBank/DDBJ databases">
        <title>Complete sequence of chromosome of Methylobacterium nodulans ORS 2060.</title>
        <authorList>
            <consortium name="US DOE Joint Genome Institute"/>
            <person name="Lucas S."/>
            <person name="Copeland A."/>
            <person name="Lapidus A."/>
            <person name="Glavina del Rio T."/>
            <person name="Dalin E."/>
            <person name="Tice H."/>
            <person name="Bruce D."/>
            <person name="Goodwin L."/>
            <person name="Pitluck S."/>
            <person name="Sims D."/>
            <person name="Brettin T."/>
            <person name="Detter J.C."/>
            <person name="Han C."/>
            <person name="Larimer F."/>
            <person name="Land M."/>
            <person name="Hauser L."/>
            <person name="Kyrpides N."/>
            <person name="Ivanova N."/>
            <person name="Marx C.J."/>
            <person name="Richardson P."/>
        </authorList>
    </citation>
    <scope>NUCLEOTIDE SEQUENCE [LARGE SCALE GENOMIC DNA]</scope>
    <source>
        <strain>LMG 21967 / CNCM I-2342 / ORS 2060</strain>
    </source>
</reference>
<evidence type="ECO:0000255" key="1">
    <source>
        <dbReference type="HAMAP-Rule" id="MF_01013"/>
    </source>
</evidence>
<feature type="chain" id="PRO_1000148927" description="Imidazole glycerol phosphate synthase subunit HisF">
    <location>
        <begin position="1"/>
        <end position="258"/>
    </location>
</feature>
<feature type="active site" evidence="1">
    <location>
        <position position="11"/>
    </location>
</feature>
<feature type="active site" evidence="1">
    <location>
        <position position="130"/>
    </location>
</feature>
<gene>
    <name evidence="1" type="primary">hisF</name>
    <name type="ordered locus">Mnod_7529</name>
</gene>
<organism>
    <name type="scientific">Methylobacterium nodulans (strain LMG 21967 / CNCM I-2342 / ORS 2060)</name>
    <dbReference type="NCBI Taxonomy" id="460265"/>
    <lineage>
        <taxon>Bacteria</taxon>
        <taxon>Pseudomonadati</taxon>
        <taxon>Pseudomonadota</taxon>
        <taxon>Alphaproteobacteria</taxon>
        <taxon>Hyphomicrobiales</taxon>
        <taxon>Methylobacteriaceae</taxon>
        <taxon>Methylobacterium</taxon>
    </lineage>
</organism>
<protein>
    <recommendedName>
        <fullName evidence="1">Imidazole glycerol phosphate synthase subunit HisF</fullName>
        <ecNumber evidence="1">4.3.2.10</ecNumber>
    </recommendedName>
    <alternativeName>
        <fullName evidence="1">IGP synthase cyclase subunit</fullName>
    </alternativeName>
    <alternativeName>
        <fullName evidence="1">IGP synthase subunit HisF</fullName>
    </alternativeName>
    <alternativeName>
        <fullName evidence="1">ImGP synthase subunit HisF</fullName>
        <shortName evidence="1">IGPS subunit HisF</shortName>
    </alternativeName>
</protein>
<name>HIS6_METNO</name>
<proteinExistence type="inferred from homology"/>
<sequence>MLKTRVIPCLDVKDGRVVKGVQFLDLRDAGDPVEAAKAYDRAGADELCFLDITASHEARGILLDVVQRTAEACFMPLTVGGGVRTVEDIRALLLAGADKVSINTAAVNNPDFVAEAAEKFGAQCIVVAIDAKRVSGPGEPPRWEIFTHGGRRATGIDAVAFARTVTARGAGELLVTSMDRDGMRSGYDLGLTRAIADAVSVPVIASGGVGGLDDLVAGVAEGHASAVLAASIFHFGEATVAQAKAHMAAAGLAMRLDP</sequence>
<dbReference type="EC" id="4.3.2.10" evidence="1"/>
<dbReference type="EMBL" id="CP001349">
    <property type="protein sequence ID" value="ACL62265.1"/>
    <property type="molecule type" value="Genomic_DNA"/>
</dbReference>
<dbReference type="RefSeq" id="WP_015933819.1">
    <property type="nucleotide sequence ID" value="NC_011894.1"/>
</dbReference>
<dbReference type="SMR" id="B8IPH3"/>
<dbReference type="STRING" id="460265.Mnod_7529"/>
<dbReference type="KEGG" id="mno:Mnod_7529"/>
<dbReference type="eggNOG" id="COG0107">
    <property type="taxonomic scope" value="Bacteria"/>
</dbReference>
<dbReference type="HOGENOM" id="CLU_048577_4_0_5"/>
<dbReference type="OrthoDB" id="9781903at2"/>
<dbReference type="UniPathway" id="UPA00031">
    <property type="reaction ID" value="UER00010"/>
</dbReference>
<dbReference type="Proteomes" id="UP000008207">
    <property type="component" value="Chromosome"/>
</dbReference>
<dbReference type="GO" id="GO:0005737">
    <property type="term" value="C:cytoplasm"/>
    <property type="evidence" value="ECO:0007669"/>
    <property type="project" value="UniProtKB-SubCell"/>
</dbReference>
<dbReference type="GO" id="GO:0000107">
    <property type="term" value="F:imidazoleglycerol-phosphate synthase activity"/>
    <property type="evidence" value="ECO:0007669"/>
    <property type="project" value="UniProtKB-UniRule"/>
</dbReference>
<dbReference type="GO" id="GO:0016829">
    <property type="term" value="F:lyase activity"/>
    <property type="evidence" value="ECO:0007669"/>
    <property type="project" value="UniProtKB-KW"/>
</dbReference>
<dbReference type="GO" id="GO:0000105">
    <property type="term" value="P:L-histidine biosynthetic process"/>
    <property type="evidence" value="ECO:0007669"/>
    <property type="project" value="UniProtKB-UniRule"/>
</dbReference>
<dbReference type="CDD" id="cd04731">
    <property type="entry name" value="HisF"/>
    <property type="match status" value="1"/>
</dbReference>
<dbReference type="FunFam" id="3.20.20.70:FF:000006">
    <property type="entry name" value="Imidazole glycerol phosphate synthase subunit HisF"/>
    <property type="match status" value="1"/>
</dbReference>
<dbReference type="Gene3D" id="3.20.20.70">
    <property type="entry name" value="Aldolase class I"/>
    <property type="match status" value="1"/>
</dbReference>
<dbReference type="HAMAP" id="MF_01013">
    <property type="entry name" value="HisF"/>
    <property type="match status" value="1"/>
</dbReference>
<dbReference type="InterPro" id="IPR013785">
    <property type="entry name" value="Aldolase_TIM"/>
</dbReference>
<dbReference type="InterPro" id="IPR006062">
    <property type="entry name" value="His_biosynth"/>
</dbReference>
<dbReference type="InterPro" id="IPR004651">
    <property type="entry name" value="HisF"/>
</dbReference>
<dbReference type="InterPro" id="IPR050064">
    <property type="entry name" value="IGPS_HisA/HisF"/>
</dbReference>
<dbReference type="InterPro" id="IPR011060">
    <property type="entry name" value="RibuloseP-bd_barrel"/>
</dbReference>
<dbReference type="NCBIfam" id="TIGR00735">
    <property type="entry name" value="hisF"/>
    <property type="match status" value="1"/>
</dbReference>
<dbReference type="PANTHER" id="PTHR21235:SF2">
    <property type="entry name" value="IMIDAZOLE GLYCEROL PHOSPHATE SYNTHASE HISHF"/>
    <property type="match status" value="1"/>
</dbReference>
<dbReference type="PANTHER" id="PTHR21235">
    <property type="entry name" value="IMIDAZOLE GLYCEROL PHOSPHATE SYNTHASE SUBUNIT HISF/H IGP SYNTHASE SUBUNIT HISF/H"/>
    <property type="match status" value="1"/>
</dbReference>
<dbReference type="Pfam" id="PF00977">
    <property type="entry name" value="His_biosynth"/>
    <property type="match status" value="1"/>
</dbReference>
<dbReference type="SUPFAM" id="SSF51366">
    <property type="entry name" value="Ribulose-phoshate binding barrel"/>
    <property type="match status" value="1"/>
</dbReference>
<accession>B8IPH3</accession>